<proteinExistence type="evidence at protein level"/>
<protein>
    <recommendedName>
        <fullName>Tumor protein D54</fullName>
        <shortName>hD54</shortName>
    </recommendedName>
    <alternativeName>
        <fullName>Tumor protein D52-like 2</fullName>
    </alternativeName>
</protein>
<name>TPD54_HUMAN</name>
<sequence>MDSAGQDINLNSPNKGLLSDSMTDVPVDTGVAARTPAVEGLTEAEEEELRAELTKVEEEIVTLRQVLAAKERHCGELKRRLGLSTLGELKQNLSRSWHDVQVSSAYVKTSEKLGEWNEKVTQSDLYKKTQETLSQAGQKTSAALSTVGSAISRKLGDMRNSATFKSFEDRVGTIKSKVVGDRENGSDNLPSSAGSGDKPLSDPAPF</sequence>
<reference key="1">
    <citation type="journal article" date="1998" name="Biochim. Biophys. Acta">
        <title>Cloning of a third member of the D52 gene family indicates alternative coding sequence usage in D52-like transcripts.</title>
        <authorList>
            <person name="Nourse C.R."/>
            <person name="Mattei M.-G."/>
            <person name="Gunning P."/>
            <person name="Byrne J.A."/>
        </authorList>
    </citation>
    <scope>NUCLEOTIDE SEQUENCE [MRNA] (ISOFORM 1)</scope>
    <scope>ALTERNATIVE SPLICING</scope>
    <source>
        <tissue>Mammary gland</tissue>
    </source>
</reference>
<reference key="2">
    <citation type="journal article" date="2004" name="Nat. Genet.">
        <title>Complete sequencing and characterization of 21,243 full-length human cDNAs.</title>
        <authorList>
            <person name="Ota T."/>
            <person name="Suzuki Y."/>
            <person name="Nishikawa T."/>
            <person name="Otsuki T."/>
            <person name="Sugiyama T."/>
            <person name="Irie R."/>
            <person name="Wakamatsu A."/>
            <person name="Hayashi K."/>
            <person name="Sato H."/>
            <person name="Nagai K."/>
            <person name="Kimura K."/>
            <person name="Makita H."/>
            <person name="Sekine M."/>
            <person name="Obayashi M."/>
            <person name="Nishi T."/>
            <person name="Shibahara T."/>
            <person name="Tanaka T."/>
            <person name="Ishii S."/>
            <person name="Yamamoto J."/>
            <person name="Saito K."/>
            <person name="Kawai Y."/>
            <person name="Isono Y."/>
            <person name="Nakamura Y."/>
            <person name="Nagahari K."/>
            <person name="Murakami K."/>
            <person name="Yasuda T."/>
            <person name="Iwayanagi T."/>
            <person name="Wagatsuma M."/>
            <person name="Shiratori A."/>
            <person name="Sudo H."/>
            <person name="Hosoiri T."/>
            <person name="Kaku Y."/>
            <person name="Kodaira H."/>
            <person name="Kondo H."/>
            <person name="Sugawara M."/>
            <person name="Takahashi M."/>
            <person name="Kanda K."/>
            <person name="Yokoi T."/>
            <person name="Furuya T."/>
            <person name="Kikkawa E."/>
            <person name="Omura Y."/>
            <person name="Abe K."/>
            <person name="Kamihara K."/>
            <person name="Katsuta N."/>
            <person name="Sato K."/>
            <person name="Tanikawa M."/>
            <person name="Yamazaki M."/>
            <person name="Ninomiya K."/>
            <person name="Ishibashi T."/>
            <person name="Yamashita H."/>
            <person name="Murakawa K."/>
            <person name="Fujimori K."/>
            <person name="Tanai H."/>
            <person name="Kimata M."/>
            <person name="Watanabe M."/>
            <person name="Hiraoka S."/>
            <person name="Chiba Y."/>
            <person name="Ishida S."/>
            <person name="Ono Y."/>
            <person name="Takiguchi S."/>
            <person name="Watanabe S."/>
            <person name="Yosida M."/>
            <person name="Hotuta T."/>
            <person name="Kusano J."/>
            <person name="Kanehori K."/>
            <person name="Takahashi-Fujii A."/>
            <person name="Hara H."/>
            <person name="Tanase T.-O."/>
            <person name="Nomura Y."/>
            <person name="Togiya S."/>
            <person name="Komai F."/>
            <person name="Hara R."/>
            <person name="Takeuchi K."/>
            <person name="Arita M."/>
            <person name="Imose N."/>
            <person name="Musashino K."/>
            <person name="Yuuki H."/>
            <person name="Oshima A."/>
            <person name="Sasaki N."/>
            <person name="Aotsuka S."/>
            <person name="Yoshikawa Y."/>
            <person name="Matsunawa H."/>
            <person name="Ichihara T."/>
            <person name="Shiohata N."/>
            <person name="Sano S."/>
            <person name="Moriya S."/>
            <person name="Momiyama H."/>
            <person name="Satoh N."/>
            <person name="Takami S."/>
            <person name="Terashima Y."/>
            <person name="Suzuki O."/>
            <person name="Nakagawa S."/>
            <person name="Senoh A."/>
            <person name="Mizoguchi H."/>
            <person name="Goto Y."/>
            <person name="Shimizu F."/>
            <person name="Wakebe H."/>
            <person name="Hishigaki H."/>
            <person name="Watanabe T."/>
            <person name="Sugiyama A."/>
            <person name="Takemoto M."/>
            <person name="Kawakami B."/>
            <person name="Yamazaki M."/>
            <person name="Watanabe K."/>
            <person name="Kumagai A."/>
            <person name="Itakura S."/>
            <person name="Fukuzumi Y."/>
            <person name="Fujimori Y."/>
            <person name="Komiyama M."/>
            <person name="Tashiro H."/>
            <person name="Tanigami A."/>
            <person name="Fujiwara T."/>
            <person name="Ono T."/>
            <person name="Yamada K."/>
            <person name="Fujii Y."/>
            <person name="Ozaki K."/>
            <person name="Hirao M."/>
            <person name="Ohmori Y."/>
            <person name="Kawabata A."/>
            <person name="Hikiji T."/>
            <person name="Kobatake N."/>
            <person name="Inagaki H."/>
            <person name="Ikema Y."/>
            <person name="Okamoto S."/>
            <person name="Okitani R."/>
            <person name="Kawakami T."/>
            <person name="Noguchi S."/>
            <person name="Itoh T."/>
            <person name="Shigeta K."/>
            <person name="Senba T."/>
            <person name="Matsumura K."/>
            <person name="Nakajima Y."/>
            <person name="Mizuno T."/>
            <person name="Morinaga M."/>
            <person name="Sasaki M."/>
            <person name="Togashi T."/>
            <person name="Oyama M."/>
            <person name="Hata H."/>
            <person name="Watanabe M."/>
            <person name="Komatsu T."/>
            <person name="Mizushima-Sugano J."/>
            <person name="Satoh T."/>
            <person name="Shirai Y."/>
            <person name="Takahashi Y."/>
            <person name="Nakagawa K."/>
            <person name="Okumura K."/>
            <person name="Nagase T."/>
            <person name="Nomura N."/>
            <person name="Kikuchi H."/>
            <person name="Masuho Y."/>
            <person name="Yamashita R."/>
            <person name="Nakai K."/>
            <person name="Yada T."/>
            <person name="Nakamura Y."/>
            <person name="Ohara O."/>
            <person name="Isogai T."/>
            <person name="Sugano S."/>
        </authorList>
    </citation>
    <scope>NUCLEOTIDE SEQUENCE [LARGE SCALE MRNA] (ISOFORMS 4 AND 6)</scope>
    <source>
        <tissue>Brain</tissue>
        <tissue>Kidney</tissue>
    </source>
</reference>
<reference key="3">
    <citation type="submission" date="2004-10" db="EMBL/GenBank/DDBJ databases">
        <title>Cloning of human full-length CDSs in BD Creator(TM) system donor vector.</title>
        <authorList>
            <person name="Kalnine N."/>
            <person name="Chen X."/>
            <person name="Rolfs A."/>
            <person name="Halleck A."/>
            <person name="Hines L."/>
            <person name="Eisenstein S."/>
            <person name="Koundinya M."/>
            <person name="Raphael J."/>
            <person name="Moreira D."/>
            <person name="Kelley T."/>
            <person name="LaBaer J."/>
            <person name="Lin Y."/>
            <person name="Phelan M."/>
            <person name="Farmer A."/>
        </authorList>
    </citation>
    <scope>NUCLEOTIDE SEQUENCE [LARGE SCALE MRNA] (ISOFORM 5)</scope>
</reference>
<reference key="4">
    <citation type="journal article" date="2001" name="Nature">
        <title>The DNA sequence and comparative analysis of human chromosome 20.</title>
        <authorList>
            <person name="Deloukas P."/>
            <person name="Matthews L.H."/>
            <person name="Ashurst J.L."/>
            <person name="Burton J."/>
            <person name="Gilbert J.G.R."/>
            <person name="Jones M."/>
            <person name="Stavrides G."/>
            <person name="Almeida J.P."/>
            <person name="Babbage A.K."/>
            <person name="Bagguley C.L."/>
            <person name="Bailey J."/>
            <person name="Barlow K.F."/>
            <person name="Bates K.N."/>
            <person name="Beard L.M."/>
            <person name="Beare D.M."/>
            <person name="Beasley O.P."/>
            <person name="Bird C.P."/>
            <person name="Blakey S.E."/>
            <person name="Bridgeman A.M."/>
            <person name="Brown A.J."/>
            <person name="Buck D."/>
            <person name="Burrill W.D."/>
            <person name="Butler A.P."/>
            <person name="Carder C."/>
            <person name="Carter N.P."/>
            <person name="Chapman J.C."/>
            <person name="Clamp M."/>
            <person name="Clark G."/>
            <person name="Clark L.N."/>
            <person name="Clark S.Y."/>
            <person name="Clee C.M."/>
            <person name="Clegg S."/>
            <person name="Cobley V.E."/>
            <person name="Collier R.E."/>
            <person name="Connor R.E."/>
            <person name="Corby N.R."/>
            <person name="Coulson A."/>
            <person name="Coville G.J."/>
            <person name="Deadman R."/>
            <person name="Dhami P.D."/>
            <person name="Dunn M."/>
            <person name="Ellington A.G."/>
            <person name="Frankland J.A."/>
            <person name="Fraser A."/>
            <person name="French L."/>
            <person name="Garner P."/>
            <person name="Grafham D.V."/>
            <person name="Griffiths C."/>
            <person name="Griffiths M.N.D."/>
            <person name="Gwilliam R."/>
            <person name="Hall R.E."/>
            <person name="Hammond S."/>
            <person name="Harley J.L."/>
            <person name="Heath P.D."/>
            <person name="Ho S."/>
            <person name="Holden J.L."/>
            <person name="Howden P.J."/>
            <person name="Huckle E."/>
            <person name="Hunt A.R."/>
            <person name="Hunt S.E."/>
            <person name="Jekosch K."/>
            <person name="Johnson C.M."/>
            <person name="Johnson D."/>
            <person name="Kay M.P."/>
            <person name="Kimberley A.M."/>
            <person name="King A."/>
            <person name="Knights A."/>
            <person name="Laird G.K."/>
            <person name="Lawlor S."/>
            <person name="Lehvaeslaiho M.H."/>
            <person name="Leversha M.A."/>
            <person name="Lloyd C."/>
            <person name="Lloyd D.M."/>
            <person name="Lovell J.D."/>
            <person name="Marsh V.L."/>
            <person name="Martin S.L."/>
            <person name="McConnachie L.J."/>
            <person name="McLay K."/>
            <person name="McMurray A.A."/>
            <person name="Milne S.A."/>
            <person name="Mistry D."/>
            <person name="Moore M.J.F."/>
            <person name="Mullikin J.C."/>
            <person name="Nickerson T."/>
            <person name="Oliver K."/>
            <person name="Parker A."/>
            <person name="Patel R."/>
            <person name="Pearce T.A.V."/>
            <person name="Peck A.I."/>
            <person name="Phillimore B.J.C.T."/>
            <person name="Prathalingam S.R."/>
            <person name="Plumb R.W."/>
            <person name="Ramsay H."/>
            <person name="Rice C.M."/>
            <person name="Ross M.T."/>
            <person name="Scott C.E."/>
            <person name="Sehra H.K."/>
            <person name="Shownkeen R."/>
            <person name="Sims S."/>
            <person name="Skuce C.D."/>
            <person name="Smith M.L."/>
            <person name="Soderlund C."/>
            <person name="Steward C.A."/>
            <person name="Sulston J.E."/>
            <person name="Swann R.M."/>
            <person name="Sycamore N."/>
            <person name="Taylor R."/>
            <person name="Tee L."/>
            <person name="Thomas D.W."/>
            <person name="Thorpe A."/>
            <person name="Tracey A."/>
            <person name="Tromans A.C."/>
            <person name="Vaudin M."/>
            <person name="Wall M."/>
            <person name="Wallis J.M."/>
            <person name="Whitehead S.L."/>
            <person name="Whittaker P."/>
            <person name="Willey D.L."/>
            <person name="Williams L."/>
            <person name="Williams S.A."/>
            <person name="Wilming L."/>
            <person name="Wray P.W."/>
            <person name="Hubbard T."/>
            <person name="Durbin R.M."/>
            <person name="Bentley D.R."/>
            <person name="Beck S."/>
            <person name="Rogers J."/>
        </authorList>
    </citation>
    <scope>NUCLEOTIDE SEQUENCE [LARGE SCALE GENOMIC DNA]</scope>
</reference>
<reference key="5">
    <citation type="submission" date="2005-09" db="EMBL/GenBank/DDBJ databases">
        <authorList>
            <person name="Mural R.J."/>
            <person name="Istrail S."/>
            <person name="Sutton G.G."/>
            <person name="Florea L."/>
            <person name="Halpern A.L."/>
            <person name="Mobarry C.M."/>
            <person name="Lippert R."/>
            <person name="Walenz B."/>
            <person name="Shatkay H."/>
            <person name="Dew I."/>
            <person name="Miller J.R."/>
            <person name="Flanigan M.J."/>
            <person name="Edwards N.J."/>
            <person name="Bolanos R."/>
            <person name="Fasulo D."/>
            <person name="Halldorsson B.V."/>
            <person name="Hannenhalli S."/>
            <person name="Turner R."/>
            <person name="Yooseph S."/>
            <person name="Lu F."/>
            <person name="Nusskern D.R."/>
            <person name="Shue B.C."/>
            <person name="Zheng X.H."/>
            <person name="Zhong F."/>
            <person name="Delcher A.L."/>
            <person name="Huson D.H."/>
            <person name="Kravitz S.A."/>
            <person name="Mouchard L."/>
            <person name="Reinert K."/>
            <person name="Remington K.A."/>
            <person name="Clark A.G."/>
            <person name="Waterman M.S."/>
            <person name="Eichler E.E."/>
            <person name="Adams M.D."/>
            <person name="Hunkapiller M.W."/>
            <person name="Myers E.W."/>
            <person name="Venter J.C."/>
        </authorList>
    </citation>
    <scope>NUCLEOTIDE SEQUENCE [LARGE SCALE GENOMIC DNA]</scope>
</reference>
<reference key="6">
    <citation type="journal article" date="2004" name="Genome Res.">
        <title>The status, quality, and expansion of the NIH full-length cDNA project: the Mammalian Gene Collection (MGC).</title>
        <authorList>
            <consortium name="The MGC Project Team"/>
        </authorList>
    </citation>
    <scope>NUCLEOTIDE SEQUENCE [LARGE SCALE MRNA] (ISOFORMS 1 AND 7)</scope>
    <source>
        <tissue>Placenta</tissue>
        <tissue>Retinoblastoma</tissue>
    </source>
</reference>
<reference key="7">
    <citation type="journal article" date="2001" name="Genomics">
        <title>Identification of MAL2, a novel member of the mal proteolipid family, though interactions with TPD52-like proteins in the yeast two-hybrid system.</title>
        <authorList>
            <person name="Wilson S.H.D."/>
            <person name="Bailey A.M."/>
            <person name="Nourse C.R."/>
            <person name="Mattei M.-G."/>
            <person name="Byrne J.A."/>
        </authorList>
    </citation>
    <scope>INTERACTION WITH MAL2</scope>
</reference>
<reference key="8">
    <citation type="journal article" date="2006" name="Cell">
        <title>Global, in vivo, and site-specific phosphorylation dynamics in signaling networks.</title>
        <authorList>
            <person name="Olsen J.V."/>
            <person name="Blagoev B."/>
            <person name="Gnad F."/>
            <person name="Macek B."/>
            <person name="Kumar C."/>
            <person name="Mortensen P."/>
            <person name="Mann M."/>
        </authorList>
    </citation>
    <scope>PHOSPHORYLATION [LARGE SCALE ANALYSIS] AT SER-12 AND SER-166</scope>
    <scope>IDENTIFICATION BY MASS SPECTROMETRY [LARGE SCALE ANALYSIS]</scope>
    <source>
        <tissue>Cervix carcinoma</tissue>
    </source>
</reference>
<reference key="9">
    <citation type="journal article" date="2008" name="J. Proteome Res.">
        <title>Phosphorylation analysis of primary human T lymphocytes using sequential IMAC and titanium oxide enrichment.</title>
        <authorList>
            <person name="Carrascal M."/>
            <person name="Ovelleiro D."/>
            <person name="Casas V."/>
            <person name="Gay M."/>
            <person name="Abian J."/>
        </authorList>
    </citation>
    <scope>PHOSPHORYLATION [LARGE SCALE ANALYSIS] AT SER-166</scope>
    <scope>IDENTIFICATION BY MASS SPECTROMETRY [LARGE SCALE ANALYSIS]</scope>
    <source>
        <tissue>T-cell</tissue>
    </source>
</reference>
<reference key="10">
    <citation type="journal article" date="2008" name="Mol. Cell">
        <title>Kinase-selective enrichment enables quantitative phosphoproteomics of the kinome across the cell cycle.</title>
        <authorList>
            <person name="Daub H."/>
            <person name="Olsen J.V."/>
            <person name="Bairlein M."/>
            <person name="Gnad F."/>
            <person name="Oppermann F.S."/>
            <person name="Korner R."/>
            <person name="Greff Z."/>
            <person name="Keri G."/>
            <person name="Stemmann O."/>
            <person name="Mann M."/>
        </authorList>
    </citation>
    <scope>PHOSPHORYLATION [LARGE SCALE ANALYSIS] AT SER-12 AND SER-166</scope>
    <scope>IDENTIFICATION BY MASS SPECTROMETRY [LARGE SCALE ANALYSIS]</scope>
    <source>
        <tissue>Cervix carcinoma</tissue>
    </source>
</reference>
<reference key="11">
    <citation type="journal article" date="2008" name="Proc. Natl. Acad. Sci. U.S.A.">
        <title>A quantitative atlas of mitotic phosphorylation.</title>
        <authorList>
            <person name="Dephoure N."/>
            <person name="Zhou C."/>
            <person name="Villen J."/>
            <person name="Beausoleil S.A."/>
            <person name="Bakalarski C.E."/>
            <person name="Elledge S.J."/>
            <person name="Gygi S.P."/>
        </authorList>
    </citation>
    <scope>PHOSPHORYLATION [LARGE SCALE ANALYSIS] AT SER-3; SER-12; SER-96 AND SER-166</scope>
    <scope>IDENTIFICATION BY MASS SPECTROMETRY [LARGE SCALE ANALYSIS]</scope>
    <source>
        <tissue>Cervix carcinoma</tissue>
    </source>
</reference>
<reference key="12">
    <citation type="journal article" date="2009" name="Anal. Chem.">
        <title>Lys-N and trypsin cover complementary parts of the phosphoproteome in a refined SCX-based approach.</title>
        <authorList>
            <person name="Gauci S."/>
            <person name="Helbig A.O."/>
            <person name="Slijper M."/>
            <person name="Krijgsveld J."/>
            <person name="Heck A.J."/>
            <person name="Mohammed S."/>
        </authorList>
    </citation>
    <scope>ACETYLATION [LARGE SCALE ANALYSIS] AT MET-1</scope>
    <scope>IDENTIFICATION BY MASS SPECTROMETRY [LARGE SCALE ANALYSIS]</scope>
</reference>
<reference key="13">
    <citation type="journal article" date="2009" name="Sci. Signal.">
        <title>Quantitative phosphoproteomic analysis of T cell receptor signaling reveals system-wide modulation of protein-protein interactions.</title>
        <authorList>
            <person name="Mayya V."/>
            <person name="Lundgren D.H."/>
            <person name="Hwang S.-I."/>
            <person name="Rezaul K."/>
            <person name="Wu L."/>
            <person name="Eng J.K."/>
            <person name="Rodionov V."/>
            <person name="Han D.K."/>
        </authorList>
    </citation>
    <scope>PHOSPHORYLATION [LARGE SCALE ANALYSIS] AT SER-96; SER-149 AND SER-166</scope>
    <scope>IDENTIFICATION BY MASS SPECTROMETRY [LARGE SCALE ANALYSIS]</scope>
    <source>
        <tissue>Leukemic T-cell</tissue>
    </source>
</reference>
<reference key="14">
    <citation type="journal article" date="2010" name="Sci. Signal.">
        <title>Quantitative phosphoproteomics reveals widespread full phosphorylation site occupancy during mitosis.</title>
        <authorList>
            <person name="Olsen J.V."/>
            <person name="Vermeulen M."/>
            <person name="Santamaria A."/>
            <person name="Kumar C."/>
            <person name="Miller M.L."/>
            <person name="Jensen L.J."/>
            <person name="Gnad F."/>
            <person name="Cox J."/>
            <person name="Jensen T.S."/>
            <person name="Nigg E.A."/>
            <person name="Brunak S."/>
            <person name="Mann M."/>
        </authorList>
    </citation>
    <scope>ACETYLATION [LARGE SCALE ANALYSIS] AT MET-1</scope>
    <scope>PHOSPHORYLATION [LARGE SCALE ANALYSIS] AT SER-12; SER-19; SER-21; SER-96 AND SER-166</scope>
    <scope>IDENTIFICATION BY MASS SPECTROMETRY [LARGE SCALE ANALYSIS]</scope>
    <source>
        <tissue>Cervix carcinoma</tissue>
    </source>
</reference>
<reference key="15">
    <citation type="journal article" date="2011" name="BMC Syst. Biol.">
        <title>Initial characterization of the human central proteome.</title>
        <authorList>
            <person name="Burkard T.R."/>
            <person name="Planyavsky M."/>
            <person name="Kaupe I."/>
            <person name="Breitwieser F.P."/>
            <person name="Buerckstuemmer T."/>
            <person name="Bennett K.L."/>
            <person name="Superti-Furga G."/>
            <person name="Colinge J."/>
        </authorList>
    </citation>
    <scope>IDENTIFICATION BY MASS SPECTROMETRY [LARGE SCALE ANALYSIS]</scope>
</reference>
<reference key="16">
    <citation type="journal article" date="2011" name="Sci. Signal.">
        <title>System-wide temporal characterization of the proteome and phosphoproteome of human embryonic stem cell differentiation.</title>
        <authorList>
            <person name="Rigbolt K.T."/>
            <person name="Prokhorova T.A."/>
            <person name="Akimov V."/>
            <person name="Henningsen J."/>
            <person name="Johansen P.T."/>
            <person name="Kratchmarova I."/>
            <person name="Kassem M."/>
            <person name="Mann M."/>
            <person name="Olsen J.V."/>
            <person name="Blagoev B."/>
        </authorList>
    </citation>
    <scope>ACETYLATION [LARGE SCALE ANALYSIS] AT MET-1</scope>
    <scope>PHOSPHORYLATION [LARGE SCALE ANALYSIS] AT SER-3; SER-12 AND SER-166</scope>
    <scope>IDENTIFICATION BY MASS SPECTROMETRY [LARGE SCALE ANALYSIS]</scope>
</reference>
<reference key="17">
    <citation type="journal article" date="2012" name="Mol. Cell. Proteomics">
        <title>Comparative large-scale characterisation of plant vs. mammal proteins reveals similar and idiosyncratic N-alpha acetylation features.</title>
        <authorList>
            <person name="Bienvenut W.V."/>
            <person name="Sumpton D."/>
            <person name="Martinez A."/>
            <person name="Lilla S."/>
            <person name="Espagne C."/>
            <person name="Meinnel T."/>
            <person name="Giglione C."/>
        </authorList>
    </citation>
    <scope>ACETYLATION [LARGE SCALE ANALYSIS] AT MET-1</scope>
    <scope>IDENTIFICATION BY MASS SPECTROMETRY [LARGE SCALE ANALYSIS]</scope>
</reference>
<reference key="18">
    <citation type="journal article" date="2012" name="Proc. Natl. Acad. Sci. U.S.A.">
        <title>N-terminal acetylome analyses and functional insights of the N-terminal acetyltransferase NatB.</title>
        <authorList>
            <person name="Van Damme P."/>
            <person name="Lasa M."/>
            <person name="Polevoda B."/>
            <person name="Gazquez C."/>
            <person name="Elosegui-Artola A."/>
            <person name="Kim D.S."/>
            <person name="De Juan-Pardo E."/>
            <person name="Demeyer K."/>
            <person name="Hole K."/>
            <person name="Larrea E."/>
            <person name="Timmerman E."/>
            <person name="Prieto J."/>
            <person name="Arnesen T."/>
            <person name="Sherman F."/>
            <person name="Gevaert K."/>
            <person name="Aldabe R."/>
        </authorList>
    </citation>
    <scope>IDENTIFICATION BY MASS SPECTROMETRY [LARGE SCALE ANALYSIS]</scope>
</reference>
<reference key="19">
    <citation type="journal article" date="2013" name="J. Proteome Res.">
        <title>Toward a comprehensive characterization of a human cancer cell phosphoproteome.</title>
        <authorList>
            <person name="Zhou H."/>
            <person name="Di Palma S."/>
            <person name="Preisinger C."/>
            <person name="Peng M."/>
            <person name="Polat A.N."/>
            <person name="Heck A.J."/>
            <person name="Mohammed S."/>
        </authorList>
    </citation>
    <scope>PHOSPHORYLATION [LARGE SCALE ANALYSIS] AT SER-12; SER-19; SER-21; SER-96; SER-149; SER-161; THR-163; SER-166; THR-173 AND SER-195</scope>
    <scope>IDENTIFICATION BY MASS SPECTROMETRY [LARGE SCALE ANALYSIS]</scope>
    <source>
        <tissue>Cervix carcinoma</tissue>
        <tissue>Erythroleukemia</tissue>
    </source>
</reference>
<reference key="20">
    <citation type="journal article" date="2014" name="J. Proteomics">
        <title>An enzyme assisted RP-RPLC approach for in-depth analysis of human liver phosphoproteome.</title>
        <authorList>
            <person name="Bian Y."/>
            <person name="Song C."/>
            <person name="Cheng K."/>
            <person name="Dong M."/>
            <person name="Wang F."/>
            <person name="Huang J."/>
            <person name="Sun D."/>
            <person name="Wang L."/>
            <person name="Ye M."/>
            <person name="Zou H."/>
        </authorList>
    </citation>
    <scope>PHOSPHORYLATION [LARGE SCALE ANALYSIS] AT SER-19 AND SER-166</scope>
    <scope>IDENTIFICATION BY MASS SPECTROMETRY [LARGE SCALE ANALYSIS]</scope>
    <source>
        <tissue>Liver</tissue>
    </source>
</reference>
<reference key="21">
    <citation type="journal article" date="2015" name="Proteomics">
        <title>N-terminome analysis of the human mitochondrial proteome.</title>
        <authorList>
            <person name="Vaca Jacome A.S."/>
            <person name="Rabilloud T."/>
            <person name="Schaeffer-Reiss C."/>
            <person name="Rompais M."/>
            <person name="Ayoub D."/>
            <person name="Lane L."/>
            <person name="Bairoch A."/>
            <person name="Van Dorsselaer A."/>
            <person name="Carapito C."/>
        </authorList>
    </citation>
    <scope>IDENTIFICATION BY MASS SPECTROMETRY [LARGE SCALE ANALYSIS]</scope>
</reference>
<accession>O43399</accession>
<accession>B4DPJ6</accession>
<accession>E1P5G7</accession>
<accession>O43398</accession>
<accession>Q5JWU5</accession>
<accession>Q5JWU6</accession>
<accession>Q5JWU8</accession>
<accession>Q5U0E0</accession>
<accession>Q9H3Z6</accession>
<organism>
    <name type="scientific">Homo sapiens</name>
    <name type="common">Human</name>
    <dbReference type="NCBI Taxonomy" id="9606"/>
    <lineage>
        <taxon>Eukaryota</taxon>
        <taxon>Metazoa</taxon>
        <taxon>Chordata</taxon>
        <taxon>Craniata</taxon>
        <taxon>Vertebrata</taxon>
        <taxon>Euteleostomi</taxon>
        <taxon>Mammalia</taxon>
        <taxon>Eutheria</taxon>
        <taxon>Euarchontoglires</taxon>
        <taxon>Primates</taxon>
        <taxon>Haplorrhini</taxon>
        <taxon>Catarrhini</taxon>
        <taxon>Hominidae</taxon>
        <taxon>Homo</taxon>
    </lineage>
</organism>
<feature type="chain" id="PRO_0000185744" description="Tumor protein D54">
    <location>
        <begin position="1"/>
        <end position="206"/>
    </location>
</feature>
<feature type="region of interest" description="Disordered" evidence="4">
    <location>
        <begin position="1"/>
        <end position="24"/>
    </location>
</feature>
<feature type="region of interest" description="Disordered" evidence="4">
    <location>
        <begin position="175"/>
        <end position="206"/>
    </location>
</feature>
<feature type="coiled-coil region" evidence="3">
    <location>
        <begin position="38"/>
        <end position="82"/>
    </location>
</feature>
<feature type="compositionally biased region" description="Polar residues" evidence="4">
    <location>
        <begin position="1"/>
        <end position="14"/>
    </location>
</feature>
<feature type="compositionally biased region" description="Basic and acidic residues" evidence="4">
    <location>
        <begin position="175"/>
        <end position="185"/>
    </location>
</feature>
<feature type="modified residue" description="N-acetylmethionine" evidence="14 16 17 18">
    <location>
        <position position="1"/>
    </location>
</feature>
<feature type="modified residue" description="Phosphoserine" evidence="11 17">
    <location>
        <position position="3"/>
    </location>
</feature>
<feature type="modified residue" description="Phosphoserine" evidence="10 11 12 16 17 19">
    <location>
        <position position="12"/>
    </location>
</feature>
<feature type="modified residue" description="Phosphoserine" evidence="16 19 20">
    <location>
        <position position="19"/>
    </location>
</feature>
<feature type="modified residue" description="Phosphoserine" evidence="16 19">
    <location>
        <position position="21"/>
    </location>
</feature>
<feature type="modified residue" description="Phosphoserine" evidence="11 15 16 19">
    <location>
        <position position="96"/>
    </location>
</feature>
<feature type="modified residue" description="Phosphoserine" evidence="15 19">
    <location>
        <position position="149"/>
    </location>
</feature>
<feature type="modified residue" description="Phosphoserine" evidence="19">
    <location>
        <position position="161"/>
    </location>
</feature>
<feature type="modified residue" description="Phosphothreonine" evidence="19">
    <location>
        <position position="163"/>
    </location>
</feature>
<feature type="modified residue" description="Phosphoserine" evidence="10 11 12 13 15 16 17 19 20">
    <location>
        <position position="166"/>
    </location>
</feature>
<feature type="modified residue" description="Phosphothreonine" evidence="19">
    <location>
        <position position="173"/>
    </location>
</feature>
<feature type="modified residue" description="Phosphoserine" evidence="2">
    <location>
        <position position="192"/>
    </location>
</feature>
<feature type="modified residue" description="Phosphoserine" evidence="19">
    <location>
        <position position="195"/>
    </location>
</feature>
<feature type="splice variant" id="VSP_045154" description="In isoform 6." evidence="6">
    <location>
        <begin position="7"/>
        <end position="29"/>
    </location>
</feature>
<feature type="splice variant" id="VSP_006547" description="In isoform 2, isoform 3, isoform 4 and isoform 6." evidence="6">
    <location>
        <begin position="106"/>
        <end position="125"/>
    </location>
</feature>
<feature type="splice variant" id="VSP_038361" description="In isoform 4 and isoform 5." evidence="6 8">
    <original>D</original>
    <variation>DMSSYSIRHSISMPA</variation>
    <location>
        <position position="157"/>
    </location>
</feature>
<feature type="splice variant" id="VSP_047409" description="In isoform 7." evidence="7">
    <original>D</original>
    <variation>DMRAHPFSHSFSSYSIRHSISMPA</variation>
    <location>
        <position position="157"/>
    </location>
</feature>
<feature type="splice variant" id="VSP_036756" description="In isoform 3." evidence="9">
    <original>R</original>
    <variation>RAHPFSHSFSSYSIRHSISMPAMR</variation>
    <location>
        <position position="159"/>
    </location>
</feature>
<feature type="sequence conflict" description="In Ref. 1; AAC98478." evidence="9" ref="1">
    <original>R</original>
    <variation>K</variation>
    <location>
        <position position="72"/>
    </location>
</feature>
<evidence type="ECO:0000250" key="1"/>
<evidence type="ECO:0000250" key="2">
    <source>
        <dbReference type="UniProtKB" id="Q9CYZ2"/>
    </source>
</evidence>
<evidence type="ECO:0000255" key="3"/>
<evidence type="ECO:0000256" key="4">
    <source>
        <dbReference type="SAM" id="MobiDB-lite"/>
    </source>
</evidence>
<evidence type="ECO:0000269" key="5">
    <source>
    </source>
</evidence>
<evidence type="ECO:0000303" key="6">
    <source>
    </source>
</evidence>
<evidence type="ECO:0000303" key="7">
    <source>
    </source>
</evidence>
<evidence type="ECO:0000303" key="8">
    <source ref="3"/>
</evidence>
<evidence type="ECO:0000305" key="9"/>
<evidence type="ECO:0007744" key="10">
    <source>
    </source>
</evidence>
<evidence type="ECO:0007744" key="11">
    <source>
    </source>
</evidence>
<evidence type="ECO:0007744" key="12">
    <source>
    </source>
</evidence>
<evidence type="ECO:0007744" key="13">
    <source>
    </source>
</evidence>
<evidence type="ECO:0007744" key="14">
    <source>
    </source>
</evidence>
<evidence type="ECO:0007744" key="15">
    <source>
    </source>
</evidence>
<evidence type="ECO:0007744" key="16">
    <source>
    </source>
</evidence>
<evidence type="ECO:0007744" key="17">
    <source>
    </source>
</evidence>
<evidence type="ECO:0007744" key="18">
    <source>
    </source>
</evidence>
<evidence type="ECO:0007744" key="19">
    <source>
    </source>
</evidence>
<evidence type="ECO:0007744" key="20">
    <source>
    </source>
</evidence>
<comment type="subunit">
    <text evidence="1 5">Forms a homodimer or heterodimer with other members of the family (By similarity). Interacts with MAL2.</text>
</comment>
<comment type="interaction">
    <interactant intactId="EBI-782604">
        <id>O43399</id>
    </interactant>
    <interactant intactId="EBI-2813554">
        <id>Q8WTS1</id>
        <label>ABHD5</label>
    </interactant>
    <organismsDiffer>false</organismsDiffer>
    <experiments>3</experiments>
</comment>
<comment type="interaction">
    <interactant intactId="EBI-782604">
        <id>O43399</id>
    </interactant>
    <interactant intactId="EBI-745535">
        <id>Q8NI60</id>
        <label>COQ8A</label>
    </interactant>
    <organismsDiffer>false</organismsDiffer>
    <experiments>3</experiments>
</comment>
<comment type="interaction">
    <interactant intactId="EBI-782604">
        <id>O43399</id>
    </interactant>
    <interactant intactId="EBI-2623095">
        <id>Q9Y371</id>
        <label>SH3GLB1</label>
    </interactant>
    <organismsDiffer>false</organismsDiffer>
    <experiments>3</experiments>
</comment>
<comment type="interaction">
    <interactant intactId="EBI-782616">
        <id>O43399-2</id>
    </interactant>
    <interactant intactId="EBI-782591">
        <id>Q62393</id>
        <label>Tpd52</label>
    </interactant>
    <organismsDiffer>true</organismsDiffer>
    <experiments>2</experiments>
</comment>
<comment type="alternative products">
    <event type="alternative splicing"/>
    <isoform>
        <id>O43399-1</id>
        <name>1</name>
        <name>HD54+ins2</name>
        <sequence type="displayed"/>
    </isoform>
    <isoform>
        <id>O43399-2</id>
        <name>2</name>
        <name>HD54-ins2</name>
        <sequence type="described" ref="VSP_006547"/>
    </isoform>
    <isoform>
        <id>O43399-3</id>
        <name>3</name>
        <sequence type="described" ref="VSP_006547 VSP_036756"/>
    </isoform>
    <isoform>
        <id>O43399-4</id>
        <name>4</name>
        <sequence type="described" ref="VSP_006547 VSP_038361"/>
    </isoform>
    <isoform>
        <id>O43399-5</id>
        <name>5</name>
        <sequence type="described" ref="VSP_038361"/>
    </isoform>
    <isoform>
        <id>O43399-6</id>
        <name>6</name>
        <sequence type="described" ref="VSP_045154 VSP_006547"/>
    </isoform>
    <isoform>
        <id>O43399-7</id>
        <name>7</name>
        <sequence type="described" ref="VSP_047409"/>
    </isoform>
    <text>Additional isoforms seem to exist.</text>
</comment>
<comment type="similarity">
    <text evidence="9">Belongs to the TPD52 family.</text>
</comment>
<comment type="sequence caution" evidence="9">
    <conflict type="frameshift">
        <sequence resource="EMBL" id="BU165202"/>
    </conflict>
</comment>
<keyword id="KW-0007">Acetylation</keyword>
<keyword id="KW-0025">Alternative splicing</keyword>
<keyword id="KW-0175">Coiled coil</keyword>
<keyword id="KW-0597">Phosphoprotein</keyword>
<keyword id="KW-1267">Proteomics identification</keyword>
<keyword id="KW-1185">Reference proteome</keyword>
<dbReference type="EMBL" id="AF004429">
    <property type="protein sequence ID" value="AAC98477.1"/>
    <property type="molecule type" value="mRNA"/>
</dbReference>
<dbReference type="EMBL" id="AF004430">
    <property type="protein sequence ID" value="AAC98478.1"/>
    <property type="molecule type" value="mRNA"/>
</dbReference>
<dbReference type="EMBL" id="AK055068">
    <property type="protein sequence ID" value="BAG51460.1"/>
    <property type="molecule type" value="mRNA"/>
</dbReference>
<dbReference type="EMBL" id="AK298366">
    <property type="protein sequence ID" value="BAG60608.1"/>
    <property type="molecule type" value="mRNA"/>
</dbReference>
<dbReference type="EMBL" id="BT019631">
    <property type="protein sequence ID" value="AAV38437.1"/>
    <property type="molecule type" value="mRNA"/>
</dbReference>
<dbReference type="EMBL" id="AL118506">
    <property type="status" value="NOT_ANNOTATED_CDS"/>
    <property type="molecule type" value="Genomic_DNA"/>
</dbReference>
<dbReference type="EMBL" id="CH471077">
    <property type="protein sequence ID" value="EAW75195.1"/>
    <property type="molecule type" value="Genomic_DNA"/>
</dbReference>
<dbReference type="EMBL" id="CH471077">
    <property type="protein sequence ID" value="EAW75197.1"/>
    <property type="molecule type" value="Genomic_DNA"/>
</dbReference>
<dbReference type="EMBL" id="CH471077">
    <property type="protein sequence ID" value="EAW75198.1"/>
    <property type="molecule type" value="Genomic_DNA"/>
</dbReference>
<dbReference type="EMBL" id="CH471077">
    <property type="protein sequence ID" value="EAW75199.1"/>
    <property type="molecule type" value="Genomic_DNA"/>
</dbReference>
<dbReference type="EMBL" id="CH471077">
    <property type="protein sequence ID" value="EAW75201.1"/>
    <property type="molecule type" value="Genomic_DNA"/>
</dbReference>
<dbReference type="EMBL" id="BC006804">
    <property type="protein sequence ID" value="AAH06804.1"/>
    <property type="molecule type" value="mRNA"/>
</dbReference>
<dbReference type="EMBL" id="BU165202">
    <property type="status" value="NOT_ANNOTATED_CDS"/>
    <property type="molecule type" value="mRNA"/>
</dbReference>
<dbReference type="CCDS" id="CCDS13540.1">
    <molecule id="O43399-1"/>
</dbReference>
<dbReference type="CCDS" id="CCDS13541.1">
    <molecule id="O43399-2"/>
</dbReference>
<dbReference type="CCDS" id="CCDS13542.1">
    <molecule id="O43399-7"/>
</dbReference>
<dbReference type="CCDS" id="CCDS13543.1">
    <molecule id="O43399-3"/>
</dbReference>
<dbReference type="CCDS" id="CCDS13544.1">
    <molecule id="O43399-5"/>
</dbReference>
<dbReference type="CCDS" id="CCDS13545.1">
    <molecule id="O43399-4"/>
</dbReference>
<dbReference type="CCDS" id="CCDS58785.1">
    <molecule id="O43399-6"/>
</dbReference>
<dbReference type="RefSeq" id="NP_001230821.1">
    <molecule id="O43399-6"/>
    <property type="nucleotide sequence ID" value="NM_001243892.2"/>
</dbReference>
<dbReference type="RefSeq" id="NP_003279.2">
    <molecule id="O43399-1"/>
    <property type="nucleotide sequence ID" value="NM_003288.3"/>
</dbReference>
<dbReference type="RefSeq" id="NP_955391.1">
    <molecule id="O43399-2"/>
    <property type="nucleotide sequence ID" value="NM_199359.3"/>
</dbReference>
<dbReference type="RefSeq" id="NP_955392.1">
    <molecule id="O43399-7"/>
    <property type="nucleotide sequence ID" value="NM_199360.3"/>
</dbReference>
<dbReference type="RefSeq" id="NP_955393.1">
    <molecule id="O43399-3"/>
    <property type="nucleotide sequence ID" value="NM_199361.3"/>
</dbReference>
<dbReference type="RefSeq" id="NP_955394.1">
    <molecule id="O43399-5"/>
    <property type="nucleotide sequence ID" value="NM_199362.3"/>
</dbReference>
<dbReference type="RefSeq" id="NP_955395.1">
    <molecule id="O43399-4"/>
    <property type="nucleotide sequence ID" value="NM_199363.3"/>
</dbReference>
<dbReference type="SMR" id="O43399"/>
<dbReference type="BioGRID" id="113018">
    <property type="interactions" value="166"/>
</dbReference>
<dbReference type="FunCoup" id="O43399">
    <property type="interactions" value="2316"/>
</dbReference>
<dbReference type="IntAct" id="O43399">
    <property type="interactions" value="45"/>
</dbReference>
<dbReference type="MINT" id="O43399"/>
<dbReference type="STRING" id="9606.ENSP00000217121"/>
<dbReference type="DrugBank" id="DB12695">
    <property type="generic name" value="Phenethyl Isothiocyanate"/>
</dbReference>
<dbReference type="GlyCosmos" id="O43399">
    <property type="glycosylation" value="4 sites, 2 glycans"/>
</dbReference>
<dbReference type="GlyGen" id="O43399">
    <property type="glycosylation" value="7 sites, 2 O-linked glycans (7 sites)"/>
</dbReference>
<dbReference type="iPTMnet" id="O43399"/>
<dbReference type="MetOSite" id="O43399"/>
<dbReference type="PhosphoSitePlus" id="O43399"/>
<dbReference type="SwissPalm" id="O43399"/>
<dbReference type="BioMuta" id="TPD52L2"/>
<dbReference type="OGP" id="O43399"/>
<dbReference type="CPTAC" id="CPTAC-134"/>
<dbReference type="CPTAC" id="CPTAC-135"/>
<dbReference type="jPOST" id="O43399"/>
<dbReference type="MassIVE" id="O43399"/>
<dbReference type="PaxDb" id="9606-ENSP00000217121"/>
<dbReference type="PeptideAtlas" id="O43399"/>
<dbReference type="ProteomicsDB" id="4791"/>
<dbReference type="ProteomicsDB" id="48923">
    <molecule id="O43399-1"/>
</dbReference>
<dbReference type="ProteomicsDB" id="48924">
    <molecule id="O43399-2"/>
</dbReference>
<dbReference type="ProteomicsDB" id="48925">
    <molecule id="O43399-3"/>
</dbReference>
<dbReference type="ProteomicsDB" id="48926">
    <molecule id="O43399-4"/>
</dbReference>
<dbReference type="ProteomicsDB" id="48927">
    <molecule id="O43399-5"/>
</dbReference>
<dbReference type="ProteomicsDB" id="63405"/>
<dbReference type="Pumba" id="O43399"/>
<dbReference type="TopDownProteomics" id="O43399-5">
    <molecule id="O43399-5"/>
</dbReference>
<dbReference type="Antibodypedia" id="29897">
    <property type="antibodies" value="230 antibodies from 33 providers"/>
</dbReference>
<dbReference type="DNASU" id="7165"/>
<dbReference type="Ensembl" id="ENST00000217121.9">
    <molecule id="O43399-7"/>
    <property type="protein sequence ID" value="ENSP00000217121.5"/>
    <property type="gene ID" value="ENSG00000101150.18"/>
</dbReference>
<dbReference type="Ensembl" id="ENST00000346249.9">
    <molecule id="O43399-1"/>
    <property type="protein sequence ID" value="ENSP00000343547.4"/>
    <property type="gene ID" value="ENSG00000101150.18"/>
</dbReference>
<dbReference type="Ensembl" id="ENST00000348257.9">
    <molecule id="O43399-2"/>
    <property type="protein sequence ID" value="ENSP00000343554.5"/>
    <property type="gene ID" value="ENSG00000101150.18"/>
</dbReference>
<dbReference type="Ensembl" id="ENST00000351424.8">
    <molecule id="O43399-3"/>
    <property type="protein sequence ID" value="ENSP00000340006.4"/>
    <property type="gene ID" value="ENSG00000101150.18"/>
</dbReference>
<dbReference type="Ensembl" id="ENST00000352482.8">
    <molecule id="O43399-5"/>
    <property type="protein sequence ID" value="ENSP00000344647.4"/>
    <property type="gene ID" value="ENSG00000101150.18"/>
</dbReference>
<dbReference type="Ensembl" id="ENST00000358548.4">
    <molecule id="O43399-4"/>
    <property type="protein sequence ID" value="ENSP00000351350.4"/>
    <property type="gene ID" value="ENSG00000101150.18"/>
</dbReference>
<dbReference type="Ensembl" id="ENST00000369927.8">
    <molecule id="O43399-6"/>
    <property type="protein sequence ID" value="ENSP00000358943.2"/>
    <property type="gene ID" value="ENSG00000101150.18"/>
</dbReference>
<dbReference type="GeneID" id="7165"/>
<dbReference type="KEGG" id="hsa:7165"/>
<dbReference type="MANE-Select" id="ENST00000346249.9">
    <property type="protein sequence ID" value="ENSP00000343547.4"/>
    <property type="RefSeq nucleotide sequence ID" value="NM_003288.4"/>
    <property type="RefSeq protein sequence ID" value="NP_003279.2"/>
</dbReference>
<dbReference type="UCSC" id="uc002ygy.4">
    <molecule id="O43399-1"/>
    <property type="organism name" value="human"/>
</dbReference>
<dbReference type="AGR" id="HGNC:12007"/>
<dbReference type="CTD" id="7165"/>
<dbReference type="DisGeNET" id="7165"/>
<dbReference type="GeneCards" id="TPD52L2"/>
<dbReference type="HGNC" id="HGNC:12007">
    <property type="gene designation" value="TPD52L2"/>
</dbReference>
<dbReference type="HPA" id="ENSG00000101150">
    <property type="expression patterns" value="Low tissue specificity"/>
</dbReference>
<dbReference type="MIM" id="603747">
    <property type="type" value="gene"/>
</dbReference>
<dbReference type="neXtProt" id="NX_O43399"/>
<dbReference type="OpenTargets" id="ENSG00000101150"/>
<dbReference type="PharmGKB" id="PA36688"/>
<dbReference type="VEuPathDB" id="HostDB:ENSG00000101150"/>
<dbReference type="GeneTree" id="ENSGT00940000155572"/>
<dbReference type="HOGENOM" id="CLU_080743_1_1_1"/>
<dbReference type="InParanoid" id="O43399"/>
<dbReference type="OMA" id="SDAMMDV"/>
<dbReference type="OrthoDB" id="10000687at2759"/>
<dbReference type="PAN-GO" id="O43399">
    <property type="GO annotations" value="1 GO annotation based on evolutionary models"/>
</dbReference>
<dbReference type="PhylomeDB" id="O43399"/>
<dbReference type="TreeFam" id="TF317562"/>
<dbReference type="PathwayCommons" id="O43399"/>
<dbReference type="SignaLink" id="O43399"/>
<dbReference type="BioGRID-ORCS" id="7165">
    <property type="hits" value="12 hits in 1160 CRISPR screens"/>
</dbReference>
<dbReference type="ChiTaRS" id="TPD52L2">
    <property type="organism name" value="human"/>
</dbReference>
<dbReference type="GeneWiki" id="TPD52L2"/>
<dbReference type="GenomeRNAi" id="7165"/>
<dbReference type="Pharos" id="O43399">
    <property type="development level" value="Tbio"/>
</dbReference>
<dbReference type="PRO" id="PR:O43399"/>
<dbReference type="Proteomes" id="UP000005640">
    <property type="component" value="Chromosome 20"/>
</dbReference>
<dbReference type="RNAct" id="O43399">
    <property type="molecule type" value="protein"/>
</dbReference>
<dbReference type="Bgee" id="ENSG00000101150">
    <property type="expression patterns" value="Expressed in lower esophagus mucosa and 205 other cell types or tissues"/>
</dbReference>
<dbReference type="ExpressionAtlas" id="O43399">
    <property type="expression patterns" value="baseline and differential"/>
</dbReference>
<dbReference type="GO" id="GO:0005737">
    <property type="term" value="C:cytoplasm"/>
    <property type="evidence" value="ECO:0000314"/>
    <property type="project" value="UniProtKB"/>
</dbReference>
<dbReference type="GO" id="GO:0048471">
    <property type="term" value="C:perinuclear region of cytoplasm"/>
    <property type="evidence" value="ECO:0000314"/>
    <property type="project" value="UniProtKB"/>
</dbReference>
<dbReference type="GO" id="GO:0042803">
    <property type="term" value="F:protein homodimerization activity"/>
    <property type="evidence" value="ECO:0000314"/>
    <property type="project" value="UniProtKB"/>
</dbReference>
<dbReference type="GO" id="GO:0003723">
    <property type="term" value="F:RNA binding"/>
    <property type="evidence" value="ECO:0007005"/>
    <property type="project" value="UniProtKB"/>
</dbReference>
<dbReference type="GO" id="GO:0005975">
    <property type="term" value="P:carbohydrate metabolic process"/>
    <property type="evidence" value="ECO:0007669"/>
    <property type="project" value="InterPro"/>
</dbReference>
<dbReference type="GO" id="GO:0042127">
    <property type="term" value="P:regulation of cell population proliferation"/>
    <property type="evidence" value="ECO:0000304"/>
    <property type="project" value="UniProtKB"/>
</dbReference>
<dbReference type="Gene3D" id="1.50.10.10">
    <property type="match status" value="1"/>
</dbReference>
<dbReference type="InterPro" id="IPR012341">
    <property type="entry name" value="6hp_glycosidase-like_sf"/>
</dbReference>
<dbReference type="InterPro" id="IPR007327">
    <property type="entry name" value="TPD52"/>
</dbReference>
<dbReference type="PANTHER" id="PTHR19307">
    <property type="entry name" value="TUMOR PROTEIN D52"/>
    <property type="match status" value="1"/>
</dbReference>
<dbReference type="PANTHER" id="PTHR19307:SF13">
    <property type="entry name" value="TUMOR PROTEIN D54"/>
    <property type="match status" value="1"/>
</dbReference>
<dbReference type="Pfam" id="PF04201">
    <property type="entry name" value="TPD52"/>
    <property type="match status" value="2"/>
</dbReference>
<gene>
    <name type="primary">TPD52L2</name>
</gene>